<organism>
    <name type="scientific">Yersinia enterocolitica serotype O:8 / biotype 1B (strain NCTC 13174 / 8081)</name>
    <dbReference type="NCBI Taxonomy" id="393305"/>
    <lineage>
        <taxon>Bacteria</taxon>
        <taxon>Pseudomonadati</taxon>
        <taxon>Pseudomonadota</taxon>
        <taxon>Gammaproteobacteria</taxon>
        <taxon>Enterobacterales</taxon>
        <taxon>Yersiniaceae</taxon>
        <taxon>Yersinia</taxon>
    </lineage>
</organism>
<reference key="1">
    <citation type="journal article" date="2006" name="PLoS Genet.">
        <title>The complete genome sequence and comparative genome analysis of the high pathogenicity Yersinia enterocolitica strain 8081.</title>
        <authorList>
            <person name="Thomson N.R."/>
            <person name="Howard S."/>
            <person name="Wren B.W."/>
            <person name="Holden M.T.G."/>
            <person name="Crossman L."/>
            <person name="Challis G.L."/>
            <person name="Churcher C."/>
            <person name="Mungall K."/>
            <person name="Brooks K."/>
            <person name="Chillingworth T."/>
            <person name="Feltwell T."/>
            <person name="Abdellah Z."/>
            <person name="Hauser H."/>
            <person name="Jagels K."/>
            <person name="Maddison M."/>
            <person name="Moule S."/>
            <person name="Sanders M."/>
            <person name="Whitehead S."/>
            <person name="Quail M.A."/>
            <person name="Dougan G."/>
            <person name="Parkhill J."/>
            <person name="Prentice M.B."/>
        </authorList>
    </citation>
    <scope>NUCLEOTIDE SEQUENCE [LARGE SCALE GENOMIC DNA]</scope>
    <source>
        <strain>NCTC 13174 / 8081</strain>
    </source>
</reference>
<gene>
    <name evidence="1" type="primary">glnS</name>
    <name type="ordered locus">YE2977</name>
</gene>
<accession>A1JQH0</accession>
<protein>
    <recommendedName>
        <fullName evidence="1">Glutamine--tRNA ligase</fullName>
        <ecNumber evidence="1">6.1.1.18</ecNumber>
    </recommendedName>
    <alternativeName>
        <fullName evidence="1">Glutaminyl-tRNA synthetase</fullName>
        <shortName evidence="1">GlnRS</shortName>
    </alternativeName>
</protein>
<comment type="catalytic activity">
    <reaction evidence="1">
        <text>tRNA(Gln) + L-glutamine + ATP = L-glutaminyl-tRNA(Gln) + AMP + diphosphate</text>
        <dbReference type="Rhea" id="RHEA:20121"/>
        <dbReference type="Rhea" id="RHEA-COMP:9662"/>
        <dbReference type="Rhea" id="RHEA-COMP:9681"/>
        <dbReference type="ChEBI" id="CHEBI:30616"/>
        <dbReference type="ChEBI" id="CHEBI:33019"/>
        <dbReference type="ChEBI" id="CHEBI:58359"/>
        <dbReference type="ChEBI" id="CHEBI:78442"/>
        <dbReference type="ChEBI" id="CHEBI:78521"/>
        <dbReference type="ChEBI" id="CHEBI:456215"/>
        <dbReference type="EC" id="6.1.1.18"/>
    </reaction>
</comment>
<comment type="subunit">
    <text evidence="1">Monomer.</text>
</comment>
<comment type="subcellular location">
    <subcellularLocation>
        <location evidence="1">Cytoplasm</location>
    </subcellularLocation>
</comment>
<comment type="similarity">
    <text evidence="1">Belongs to the class-I aminoacyl-tRNA synthetase family.</text>
</comment>
<name>SYQ_YERE8</name>
<dbReference type="EC" id="6.1.1.18" evidence="1"/>
<dbReference type="EMBL" id="AM286415">
    <property type="protein sequence ID" value="CAL13016.1"/>
    <property type="molecule type" value="Genomic_DNA"/>
</dbReference>
<dbReference type="RefSeq" id="WP_011816826.1">
    <property type="nucleotide sequence ID" value="NC_008800.1"/>
</dbReference>
<dbReference type="RefSeq" id="YP_001007166.1">
    <property type="nucleotide sequence ID" value="NC_008800.1"/>
</dbReference>
<dbReference type="SMR" id="A1JQH0"/>
<dbReference type="KEGG" id="yen:YE2977"/>
<dbReference type="PATRIC" id="fig|393305.7.peg.3169"/>
<dbReference type="eggNOG" id="COG0008">
    <property type="taxonomic scope" value="Bacteria"/>
</dbReference>
<dbReference type="HOGENOM" id="CLU_001882_2_3_6"/>
<dbReference type="OrthoDB" id="9801560at2"/>
<dbReference type="Proteomes" id="UP000000642">
    <property type="component" value="Chromosome"/>
</dbReference>
<dbReference type="GO" id="GO:0005829">
    <property type="term" value="C:cytosol"/>
    <property type="evidence" value="ECO:0007669"/>
    <property type="project" value="TreeGrafter"/>
</dbReference>
<dbReference type="GO" id="GO:0005524">
    <property type="term" value="F:ATP binding"/>
    <property type="evidence" value="ECO:0007669"/>
    <property type="project" value="UniProtKB-UniRule"/>
</dbReference>
<dbReference type="GO" id="GO:0004819">
    <property type="term" value="F:glutamine-tRNA ligase activity"/>
    <property type="evidence" value="ECO:0007669"/>
    <property type="project" value="UniProtKB-UniRule"/>
</dbReference>
<dbReference type="GO" id="GO:0006425">
    <property type="term" value="P:glutaminyl-tRNA aminoacylation"/>
    <property type="evidence" value="ECO:0007669"/>
    <property type="project" value="InterPro"/>
</dbReference>
<dbReference type="GO" id="GO:0006424">
    <property type="term" value="P:glutamyl-tRNA aminoacylation"/>
    <property type="evidence" value="ECO:0007669"/>
    <property type="project" value="UniProtKB-UniRule"/>
</dbReference>
<dbReference type="CDD" id="cd00807">
    <property type="entry name" value="GlnRS_core"/>
    <property type="match status" value="1"/>
</dbReference>
<dbReference type="FunFam" id="1.10.1160.10:FF:000001">
    <property type="entry name" value="Glutamine--tRNA ligase"/>
    <property type="match status" value="1"/>
</dbReference>
<dbReference type="FunFam" id="2.40.240.10:FF:000001">
    <property type="entry name" value="Glutamine--tRNA ligase"/>
    <property type="match status" value="1"/>
</dbReference>
<dbReference type="FunFam" id="2.40.240.10:FF:000003">
    <property type="entry name" value="Glutamine--tRNA ligase"/>
    <property type="match status" value="1"/>
</dbReference>
<dbReference type="FunFam" id="3.90.800.10:FF:000001">
    <property type="entry name" value="Glutamine--tRNA ligase"/>
    <property type="match status" value="1"/>
</dbReference>
<dbReference type="FunFam" id="3.40.50.620:FF:000037">
    <property type="entry name" value="Glutamine--tRNA ligase cytoplasmic"/>
    <property type="match status" value="1"/>
</dbReference>
<dbReference type="Gene3D" id="1.10.1160.10">
    <property type="entry name" value="Glutamyl-trna Synthetase, Domain 2"/>
    <property type="match status" value="1"/>
</dbReference>
<dbReference type="Gene3D" id="3.90.800.10">
    <property type="entry name" value="Glutamyl-tRNA Synthetase, Domain 3"/>
    <property type="match status" value="1"/>
</dbReference>
<dbReference type="Gene3D" id="3.40.50.620">
    <property type="entry name" value="HUPs"/>
    <property type="match status" value="1"/>
</dbReference>
<dbReference type="Gene3D" id="2.40.240.10">
    <property type="entry name" value="Ribosomal Protein L25, Chain P"/>
    <property type="match status" value="2"/>
</dbReference>
<dbReference type="HAMAP" id="MF_00126">
    <property type="entry name" value="Gln_tRNA_synth"/>
    <property type="match status" value="1"/>
</dbReference>
<dbReference type="InterPro" id="IPR001412">
    <property type="entry name" value="aa-tRNA-synth_I_CS"/>
</dbReference>
<dbReference type="InterPro" id="IPR004514">
    <property type="entry name" value="Gln-tRNA-synth"/>
</dbReference>
<dbReference type="InterPro" id="IPR050132">
    <property type="entry name" value="Gln/Glu-tRNA_Ligase"/>
</dbReference>
<dbReference type="InterPro" id="IPR022861">
    <property type="entry name" value="Gln_tRNA_ligase_bac"/>
</dbReference>
<dbReference type="InterPro" id="IPR000924">
    <property type="entry name" value="Glu/Gln-tRNA-synth"/>
</dbReference>
<dbReference type="InterPro" id="IPR020058">
    <property type="entry name" value="Glu/Gln-tRNA-synth_Ib_cat-dom"/>
</dbReference>
<dbReference type="InterPro" id="IPR020059">
    <property type="entry name" value="Glu/Gln-tRNA-synth_Ib_codon-bd"/>
</dbReference>
<dbReference type="InterPro" id="IPR020061">
    <property type="entry name" value="Glu_tRNA_lig_a-bdl"/>
</dbReference>
<dbReference type="InterPro" id="IPR020056">
    <property type="entry name" value="Rbsml_bL25/Gln-tRNA_synth_N"/>
</dbReference>
<dbReference type="InterPro" id="IPR011035">
    <property type="entry name" value="Ribosomal_bL25/Gln-tRNA_synth"/>
</dbReference>
<dbReference type="InterPro" id="IPR014729">
    <property type="entry name" value="Rossmann-like_a/b/a_fold"/>
</dbReference>
<dbReference type="InterPro" id="IPR049437">
    <property type="entry name" value="tRNA-synt_1c_C2"/>
</dbReference>
<dbReference type="NCBIfam" id="TIGR00440">
    <property type="entry name" value="glnS"/>
    <property type="match status" value="1"/>
</dbReference>
<dbReference type="NCBIfam" id="NF011291">
    <property type="entry name" value="PRK14703.1"/>
    <property type="match status" value="1"/>
</dbReference>
<dbReference type="PANTHER" id="PTHR43097:SF5">
    <property type="entry name" value="GLUTAMATE--TRNA LIGASE"/>
    <property type="match status" value="1"/>
</dbReference>
<dbReference type="PANTHER" id="PTHR43097">
    <property type="entry name" value="GLUTAMINE-TRNA LIGASE"/>
    <property type="match status" value="1"/>
</dbReference>
<dbReference type="Pfam" id="PF00749">
    <property type="entry name" value="tRNA-synt_1c"/>
    <property type="match status" value="1"/>
</dbReference>
<dbReference type="Pfam" id="PF03950">
    <property type="entry name" value="tRNA-synt_1c_C"/>
    <property type="match status" value="1"/>
</dbReference>
<dbReference type="Pfam" id="PF20974">
    <property type="entry name" value="tRNA-synt_1c_C2"/>
    <property type="match status" value="1"/>
</dbReference>
<dbReference type="PRINTS" id="PR00987">
    <property type="entry name" value="TRNASYNTHGLU"/>
</dbReference>
<dbReference type="SUPFAM" id="SSF52374">
    <property type="entry name" value="Nucleotidylyl transferase"/>
    <property type="match status" value="1"/>
</dbReference>
<dbReference type="SUPFAM" id="SSF50715">
    <property type="entry name" value="Ribosomal protein L25-like"/>
    <property type="match status" value="1"/>
</dbReference>
<dbReference type="PROSITE" id="PS00178">
    <property type="entry name" value="AA_TRNA_LIGASE_I"/>
    <property type="match status" value="1"/>
</dbReference>
<proteinExistence type="inferred from homology"/>
<feature type="chain" id="PRO_1000016300" description="Glutamine--tRNA ligase">
    <location>
        <begin position="1"/>
        <end position="555"/>
    </location>
</feature>
<feature type="short sequence motif" description="'HIGH' region" evidence="1">
    <location>
        <begin position="34"/>
        <end position="44"/>
    </location>
</feature>
<feature type="short sequence motif" description="'KMSKS' region" evidence="1">
    <location>
        <begin position="268"/>
        <end position="272"/>
    </location>
</feature>
<feature type="binding site" evidence="1">
    <location>
        <begin position="35"/>
        <end position="37"/>
    </location>
    <ligand>
        <name>ATP</name>
        <dbReference type="ChEBI" id="CHEBI:30616"/>
    </ligand>
</feature>
<feature type="binding site" evidence="1">
    <location>
        <begin position="41"/>
        <end position="47"/>
    </location>
    <ligand>
        <name>ATP</name>
        <dbReference type="ChEBI" id="CHEBI:30616"/>
    </ligand>
</feature>
<feature type="binding site" evidence="1">
    <location>
        <position position="67"/>
    </location>
    <ligand>
        <name>L-glutamine</name>
        <dbReference type="ChEBI" id="CHEBI:58359"/>
    </ligand>
</feature>
<feature type="binding site" evidence="1">
    <location>
        <position position="212"/>
    </location>
    <ligand>
        <name>L-glutamine</name>
        <dbReference type="ChEBI" id="CHEBI:58359"/>
    </ligand>
</feature>
<feature type="binding site" evidence="1">
    <location>
        <position position="231"/>
    </location>
    <ligand>
        <name>ATP</name>
        <dbReference type="ChEBI" id="CHEBI:30616"/>
    </ligand>
</feature>
<feature type="binding site" evidence="1">
    <location>
        <begin position="261"/>
        <end position="262"/>
    </location>
    <ligand>
        <name>ATP</name>
        <dbReference type="ChEBI" id="CHEBI:30616"/>
    </ligand>
</feature>
<feature type="binding site" evidence="1">
    <location>
        <begin position="269"/>
        <end position="271"/>
    </location>
    <ligand>
        <name>ATP</name>
        <dbReference type="ChEBI" id="CHEBI:30616"/>
    </ligand>
</feature>
<keyword id="KW-0030">Aminoacyl-tRNA synthetase</keyword>
<keyword id="KW-0067">ATP-binding</keyword>
<keyword id="KW-0963">Cytoplasm</keyword>
<keyword id="KW-0436">Ligase</keyword>
<keyword id="KW-0547">Nucleotide-binding</keyword>
<keyword id="KW-0648">Protein biosynthesis</keyword>
<sequence>MSEAEARPSNFIRQIIDEDLASGKHTSVHTRFPPEPNGYLHIGHAKSICLNFGIAQDYQGQCNLRFDDTNPVKEDVEFVESIKRDVEWLGFTWSGDVRYSSDYFDQLYQYAVELINKGLAYVDELTPEQMREYRGTLTAPGKNSPYRDRSVEENLALFEKMRAGGFAEGTACLRAKIDMASPFMVMRDPVLYRIKFAEHHQSGNKWCIYPMYDFTHCISDAIEGITHSLCTLEFQDNRRLYDWVLDNISIECHPRQYEFSRLNLEYSIMSKRKLNLLVTEKVVEGWDDPRMPTISGLRRRGYTAASIREFCRRIGVTKQDNNVEMMALESCIRDDLNENAPRAMAVLDPIKVVIENRAAGEEWLTMPNHPNNPDMGTRQVPFDSEIYIDRADFREEANKQYKRLVLGKEVRLRNAYVIKAERVEKDAEGHVTTLYCSYDAETLNKDPADGRKVKGVIHWVSVKHALPAEIRLYDRLFSVPNPAAAEDFLSTINPESLIIRQGFVEPSLADAVPEKTYQFEREGYFCADSHYSRPDALVFNRTVGLRDTWAAKVTN</sequence>
<evidence type="ECO:0000255" key="1">
    <source>
        <dbReference type="HAMAP-Rule" id="MF_00126"/>
    </source>
</evidence>